<dbReference type="EC" id="3.5.4.34"/>
<dbReference type="EMBL" id="AF192530">
    <property type="protein sequence ID" value="AAF06773.1"/>
    <property type="molecule type" value="mRNA"/>
</dbReference>
<dbReference type="EMBL" id="AE014134">
    <property type="protein sequence ID" value="AAF53333.1"/>
    <property type="molecule type" value="Genomic_DNA"/>
</dbReference>
<dbReference type="RefSeq" id="NP_001260450.1">
    <property type="nucleotide sequence ID" value="NM_001273521.1"/>
</dbReference>
<dbReference type="RefSeq" id="NP_609676.1">
    <property type="nucleotide sequence ID" value="NM_135832.3"/>
</dbReference>
<dbReference type="SMR" id="Q9V3R6"/>
<dbReference type="BioGRID" id="60820">
    <property type="interactions" value="6"/>
</dbReference>
<dbReference type="FunCoup" id="Q9V3R6">
    <property type="interactions" value="1740"/>
</dbReference>
<dbReference type="STRING" id="7227.FBpp0080150"/>
<dbReference type="PaxDb" id="7227-FBpp0080150"/>
<dbReference type="EnsemblMetazoa" id="FBtr0080573">
    <property type="protein sequence ID" value="FBpp0080150"/>
    <property type="gene ID" value="FBgn0028658"/>
</dbReference>
<dbReference type="EnsemblMetazoa" id="FBtr0331627">
    <property type="protein sequence ID" value="FBpp0304017"/>
    <property type="gene ID" value="FBgn0028658"/>
</dbReference>
<dbReference type="GeneID" id="34787"/>
<dbReference type="KEGG" id="dme:Dmel_CG16889"/>
<dbReference type="UCSC" id="CG16889-RA">
    <property type="organism name" value="d. melanogaster"/>
</dbReference>
<dbReference type="AGR" id="FB:FBgn0028658"/>
<dbReference type="CTD" id="23536"/>
<dbReference type="FlyBase" id="FBgn0028658">
    <property type="gene designation" value="Adat1"/>
</dbReference>
<dbReference type="VEuPathDB" id="VectorBase:FBgn0028658"/>
<dbReference type="eggNOG" id="KOG2777">
    <property type="taxonomic scope" value="Eukaryota"/>
</dbReference>
<dbReference type="GeneTree" id="ENSGT00940000168020"/>
<dbReference type="HOGENOM" id="CLU_005382_5_1_1"/>
<dbReference type="InParanoid" id="Q9V3R6"/>
<dbReference type="OMA" id="YQLAWRQ"/>
<dbReference type="OrthoDB" id="416253at2759"/>
<dbReference type="PhylomeDB" id="Q9V3R6"/>
<dbReference type="BRENDA" id="3.5.4.34">
    <property type="organism ID" value="1994"/>
</dbReference>
<dbReference type="BioGRID-ORCS" id="34787">
    <property type="hits" value="0 hits in 1 CRISPR screen"/>
</dbReference>
<dbReference type="ChiTaRS" id="Adat1">
    <property type="organism name" value="fly"/>
</dbReference>
<dbReference type="GenomeRNAi" id="34787"/>
<dbReference type="PRO" id="PR:Q9V3R6"/>
<dbReference type="Proteomes" id="UP000000803">
    <property type="component" value="Chromosome 2L"/>
</dbReference>
<dbReference type="Bgee" id="FBgn0028658">
    <property type="expression patterns" value="Expressed in reticular neuropil associated glial cell (Drosophila) in brain and 85 other cell types or tissues"/>
</dbReference>
<dbReference type="ExpressionAtlas" id="Q9V3R6">
    <property type="expression patterns" value="baseline and differential"/>
</dbReference>
<dbReference type="GO" id="GO:0005737">
    <property type="term" value="C:cytoplasm"/>
    <property type="evidence" value="ECO:0000318"/>
    <property type="project" value="GO_Central"/>
</dbReference>
<dbReference type="GO" id="GO:0005730">
    <property type="term" value="C:nucleolus"/>
    <property type="evidence" value="ECO:0000318"/>
    <property type="project" value="GO_Central"/>
</dbReference>
<dbReference type="GO" id="GO:0003726">
    <property type="term" value="F:double-stranded RNA adenosine deaminase activity"/>
    <property type="evidence" value="ECO:0000318"/>
    <property type="project" value="GO_Central"/>
</dbReference>
<dbReference type="GO" id="GO:0003725">
    <property type="term" value="F:double-stranded RNA binding"/>
    <property type="evidence" value="ECO:0000318"/>
    <property type="project" value="GO_Central"/>
</dbReference>
<dbReference type="GO" id="GO:0046872">
    <property type="term" value="F:metal ion binding"/>
    <property type="evidence" value="ECO:0007669"/>
    <property type="project" value="UniProtKB-KW"/>
</dbReference>
<dbReference type="GO" id="GO:0003723">
    <property type="term" value="F:RNA binding"/>
    <property type="evidence" value="ECO:0000315"/>
    <property type="project" value="UniProtKB"/>
</dbReference>
<dbReference type="GO" id="GO:0008251">
    <property type="term" value="F:tRNA-specific adenosine deaminase activity"/>
    <property type="evidence" value="ECO:0000314"/>
    <property type="project" value="FlyBase"/>
</dbReference>
<dbReference type="GO" id="GO:0043829">
    <property type="term" value="F:tRNA-specific adenosine-37 deaminase activity"/>
    <property type="evidence" value="ECO:0007669"/>
    <property type="project" value="UniProtKB-EC"/>
</dbReference>
<dbReference type="GO" id="GO:0006382">
    <property type="term" value="P:adenosine to inosine editing"/>
    <property type="evidence" value="ECO:0000318"/>
    <property type="project" value="GO_Central"/>
</dbReference>
<dbReference type="GO" id="GO:0006396">
    <property type="term" value="P:RNA processing"/>
    <property type="evidence" value="ECO:0000318"/>
    <property type="project" value="GO_Central"/>
</dbReference>
<dbReference type="GO" id="GO:0006400">
    <property type="term" value="P:tRNA modification"/>
    <property type="evidence" value="ECO:0000314"/>
    <property type="project" value="FlyBase"/>
</dbReference>
<dbReference type="GO" id="GO:0008033">
    <property type="term" value="P:tRNA processing"/>
    <property type="evidence" value="ECO:0000315"/>
    <property type="project" value="UniProtKB"/>
</dbReference>
<dbReference type="InterPro" id="IPR002466">
    <property type="entry name" value="A_deamin"/>
</dbReference>
<dbReference type="PANTHER" id="PTHR46516">
    <property type="entry name" value="TRNA-SPECIFIC ADENOSINE DEAMINASE 1"/>
    <property type="match status" value="1"/>
</dbReference>
<dbReference type="PANTHER" id="PTHR46516:SF1">
    <property type="entry name" value="TRNA-SPECIFIC ADENOSINE DEAMINASE 1"/>
    <property type="match status" value="1"/>
</dbReference>
<dbReference type="Pfam" id="PF02137">
    <property type="entry name" value="A_deamin"/>
    <property type="match status" value="1"/>
</dbReference>
<dbReference type="SMART" id="SM00552">
    <property type="entry name" value="ADEAMc"/>
    <property type="match status" value="1"/>
</dbReference>
<dbReference type="PROSITE" id="PS50141">
    <property type="entry name" value="A_DEAMIN_EDITASE"/>
    <property type="match status" value="1"/>
</dbReference>
<keyword id="KW-0378">Hydrolase</keyword>
<keyword id="KW-0479">Metal-binding</keyword>
<keyword id="KW-1185">Reference proteome</keyword>
<keyword id="KW-0819">tRNA processing</keyword>
<keyword id="KW-0862">Zinc</keyword>
<evidence type="ECO:0000250" key="1"/>
<evidence type="ECO:0000255" key="2">
    <source>
        <dbReference type="PROSITE-ProRule" id="PRU00240"/>
    </source>
</evidence>
<evidence type="ECO:0000269" key="3">
    <source>
    </source>
</evidence>
<evidence type="ECO:0000305" key="4"/>
<evidence type="ECO:0000312" key="5">
    <source>
        <dbReference type="FlyBase" id="FBgn0028658"/>
    </source>
</evidence>
<comment type="function">
    <text evidence="3">Specifically deaminates adenosine-37 to inosine in tRNA-Ala.</text>
</comment>
<comment type="catalytic activity">
    <reaction evidence="3">
        <text>adenosine(37) in tRNA(Ala) + H2O + H(+) = inosine(37) in tRNA(Ala) + NH4(+)</text>
        <dbReference type="Rhea" id="RHEA:50968"/>
        <dbReference type="Rhea" id="RHEA-COMP:12855"/>
        <dbReference type="Rhea" id="RHEA-COMP:12856"/>
        <dbReference type="ChEBI" id="CHEBI:15377"/>
        <dbReference type="ChEBI" id="CHEBI:15378"/>
        <dbReference type="ChEBI" id="CHEBI:28938"/>
        <dbReference type="ChEBI" id="CHEBI:74411"/>
        <dbReference type="ChEBI" id="CHEBI:82852"/>
        <dbReference type="EC" id="3.5.4.34"/>
    </reaction>
</comment>
<comment type="cofactor">
    <cofactor evidence="1">
        <name>1D-myo-inositol hexakisphosphate</name>
        <dbReference type="ChEBI" id="CHEBI:58130"/>
    </cofactor>
    <text evidence="1">Binds 1 myo-inositol hexakisphosphate (IP6) per subunit.</text>
</comment>
<comment type="tissue specificity">
    <text evidence="3">Widely expressed in early embryos, and later concentrates in the central nervous system.</text>
</comment>
<comment type="developmental stage">
    <text evidence="3">Expressed both maternally and zygotically.</text>
</comment>
<comment type="similarity">
    <text evidence="4">Belongs to the ADAT1 family.</text>
</comment>
<reference key="1">
    <citation type="journal article" date="2000" name="Mol. Cell. Biol.">
        <title>The properties of a tRNA-specific adenosine deaminase from Drosophila melanogaster support an evolutionary link between pre-mRNA editing and tRNA modification.</title>
        <authorList>
            <person name="Keegan L.P."/>
            <person name="Gerber A.P."/>
            <person name="Brindle J."/>
            <person name="Leemans R."/>
            <person name="Gallo A."/>
            <person name="Keller W."/>
            <person name="O'Connell M.A."/>
        </authorList>
    </citation>
    <scope>NUCLEOTIDE SEQUENCE [MRNA]</scope>
    <scope>FUNCTION</scope>
    <scope>CATALYTIC ACTIVITY</scope>
    <scope>TISSUE SPECIFICITY</scope>
    <scope>DEVELOPMENTAL STAGE</scope>
    <source>
        <strain>Oregon-R</strain>
    </source>
</reference>
<reference key="2">
    <citation type="journal article" date="2000" name="Science">
        <title>The genome sequence of Drosophila melanogaster.</title>
        <authorList>
            <person name="Adams M.D."/>
            <person name="Celniker S.E."/>
            <person name="Holt R.A."/>
            <person name="Evans C.A."/>
            <person name="Gocayne J.D."/>
            <person name="Amanatides P.G."/>
            <person name="Scherer S.E."/>
            <person name="Li P.W."/>
            <person name="Hoskins R.A."/>
            <person name="Galle R.F."/>
            <person name="George R.A."/>
            <person name="Lewis S.E."/>
            <person name="Richards S."/>
            <person name="Ashburner M."/>
            <person name="Henderson S.N."/>
            <person name="Sutton G.G."/>
            <person name="Wortman J.R."/>
            <person name="Yandell M.D."/>
            <person name="Zhang Q."/>
            <person name="Chen L.X."/>
            <person name="Brandon R.C."/>
            <person name="Rogers Y.-H.C."/>
            <person name="Blazej R.G."/>
            <person name="Champe M."/>
            <person name="Pfeiffer B.D."/>
            <person name="Wan K.H."/>
            <person name="Doyle C."/>
            <person name="Baxter E.G."/>
            <person name="Helt G."/>
            <person name="Nelson C.R."/>
            <person name="Miklos G.L.G."/>
            <person name="Abril J.F."/>
            <person name="Agbayani A."/>
            <person name="An H.-J."/>
            <person name="Andrews-Pfannkoch C."/>
            <person name="Baldwin D."/>
            <person name="Ballew R.M."/>
            <person name="Basu A."/>
            <person name="Baxendale J."/>
            <person name="Bayraktaroglu L."/>
            <person name="Beasley E.M."/>
            <person name="Beeson K.Y."/>
            <person name="Benos P.V."/>
            <person name="Berman B.P."/>
            <person name="Bhandari D."/>
            <person name="Bolshakov S."/>
            <person name="Borkova D."/>
            <person name="Botchan M.R."/>
            <person name="Bouck J."/>
            <person name="Brokstein P."/>
            <person name="Brottier P."/>
            <person name="Burtis K.C."/>
            <person name="Busam D.A."/>
            <person name="Butler H."/>
            <person name="Cadieu E."/>
            <person name="Center A."/>
            <person name="Chandra I."/>
            <person name="Cherry J.M."/>
            <person name="Cawley S."/>
            <person name="Dahlke C."/>
            <person name="Davenport L.B."/>
            <person name="Davies P."/>
            <person name="de Pablos B."/>
            <person name="Delcher A."/>
            <person name="Deng Z."/>
            <person name="Mays A.D."/>
            <person name="Dew I."/>
            <person name="Dietz S.M."/>
            <person name="Dodson K."/>
            <person name="Doup L.E."/>
            <person name="Downes M."/>
            <person name="Dugan-Rocha S."/>
            <person name="Dunkov B.C."/>
            <person name="Dunn P."/>
            <person name="Durbin K.J."/>
            <person name="Evangelista C.C."/>
            <person name="Ferraz C."/>
            <person name="Ferriera S."/>
            <person name="Fleischmann W."/>
            <person name="Fosler C."/>
            <person name="Gabrielian A.E."/>
            <person name="Garg N.S."/>
            <person name="Gelbart W.M."/>
            <person name="Glasser K."/>
            <person name="Glodek A."/>
            <person name="Gong F."/>
            <person name="Gorrell J.H."/>
            <person name="Gu Z."/>
            <person name="Guan P."/>
            <person name="Harris M."/>
            <person name="Harris N.L."/>
            <person name="Harvey D.A."/>
            <person name="Heiman T.J."/>
            <person name="Hernandez J.R."/>
            <person name="Houck J."/>
            <person name="Hostin D."/>
            <person name="Houston K.A."/>
            <person name="Howland T.J."/>
            <person name="Wei M.-H."/>
            <person name="Ibegwam C."/>
            <person name="Jalali M."/>
            <person name="Kalush F."/>
            <person name="Karpen G.H."/>
            <person name="Ke Z."/>
            <person name="Kennison J.A."/>
            <person name="Ketchum K.A."/>
            <person name="Kimmel B.E."/>
            <person name="Kodira C.D."/>
            <person name="Kraft C.L."/>
            <person name="Kravitz S."/>
            <person name="Kulp D."/>
            <person name="Lai Z."/>
            <person name="Lasko P."/>
            <person name="Lei Y."/>
            <person name="Levitsky A.A."/>
            <person name="Li J.H."/>
            <person name="Li Z."/>
            <person name="Liang Y."/>
            <person name="Lin X."/>
            <person name="Liu X."/>
            <person name="Mattei B."/>
            <person name="McIntosh T.C."/>
            <person name="McLeod M.P."/>
            <person name="McPherson D."/>
            <person name="Merkulov G."/>
            <person name="Milshina N.V."/>
            <person name="Mobarry C."/>
            <person name="Morris J."/>
            <person name="Moshrefi A."/>
            <person name="Mount S.M."/>
            <person name="Moy M."/>
            <person name="Murphy B."/>
            <person name="Murphy L."/>
            <person name="Muzny D.M."/>
            <person name="Nelson D.L."/>
            <person name="Nelson D.R."/>
            <person name="Nelson K.A."/>
            <person name="Nixon K."/>
            <person name="Nusskern D.R."/>
            <person name="Pacleb J.M."/>
            <person name="Palazzolo M."/>
            <person name="Pittman G.S."/>
            <person name="Pan S."/>
            <person name="Pollard J."/>
            <person name="Puri V."/>
            <person name="Reese M.G."/>
            <person name="Reinert K."/>
            <person name="Remington K."/>
            <person name="Saunders R.D.C."/>
            <person name="Scheeler F."/>
            <person name="Shen H."/>
            <person name="Shue B.C."/>
            <person name="Siden-Kiamos I."/>
            <person name="Simpson M."/>
            <person name="Skupski M.P."/>
            <person name="Smith T.J."/>
            <person name="Spier E."/>
            <person name="Spradling A.C."/>
            <person name="Stapleton M."/>
            <person name="Strong R."/>
            <person name="Sun E."/>
            <person name="Svirskas R."/>
            <person name="Tector C."/>
            <person name="Turner R."/>
            <person name="Venter E."/>
            <person name="Wang A.H."/>
            <person name="Wang X."/>
            <person name="Wang Z.-Y."/>
            <person name="Wassarman D.A."/>
            <person name="Weinstock G.M."/>
            <person name="Weissenbach J."/>
            <person name="Williams S.M."/>
            <person name="Woodage T."/>
            <person name="Worley K.C."/>
            <person name="Wu D."/>
            <person name="Yang S."/>
            <person name="Yao Q.A."/>
            <person name="Ye J."/>
            <person name="Yeh R.-F."/>
            <person name="Zaveri J.S."/>
            <person name="Zhan M."/>
            <person name="Zhang G."/>
            <person name="Zhao Q."/>
            <person name="Zheng L."/>
            <person name="Zheng X.H."/>
            <person name="Zhong F.N."/>
            <person name="Zhong W."/>
            <person name="Zhou X."/>
            <person name="Zhu S.C."/>
            <person name="Zhu X."/>
            <person name="Smith H.O."/>
            <person name="Gibbs R.A."/>
            <person name="Myers E.W."/>
            <person name="Rubin G.M."/>
            <person name="Venter J.C."/>
        </authorList>
    </citation>
    <scope>NUCLEOTIDE SEQUENCE [LARGE SCALE GENOMIC DNA]</scope>
    <source>
        <strain>Berkeley</strain>
    </source>
</reference>
<reference key="3">
    <citation type="journal article" date="2002" name="Genome Biol.">
        <title>Annotation of the Drosophila melanogaster euchromatic genome: a systematic review.</title>
        <authorList>
            <person name="Misra S."/>
            <person name="Crosby M.A."/>
            <person name="Mungall C.J."/>
            <person name="Matthews B.B."/>
            <person name="Campbell K.S."/>
            <person name="Hradecky P."/>
            <person name="Huang Y."/>
            <person name="Kaminker J.S."/>
            <person name="Millburn G.H."/>
            <person name="Prochnik S.E."/>
            <person name="Smith C.D."/>
            <person name="Tupy J.L."/>
            <person name="Whitfield E.J."/>
            <person name="Bayraktaroglu L."/>
            <person name="Berman B.P."/>
            <person name="Bettencourt B.R."/>
            <person name="Celniker S.E."/>
            <person name="de Grey A.D.N.J."/>
            <person name="Drysdale R.A."/>
            <person name="Harris N.L."/>
            <person name="Richter J."/>
            <person name="Russo S."/>
            <person name="Schroeder A.J."/>
            <person name="Shu S.Q."/>
            <person name="Stapleton M."/>
            <person name="Yamada C."/>
            <person name="Ashburner M."/>
            <person name="Gelbart W.M."/>
            <person name="Rubin G.M."/>
            <person name="Lewis S.E."/>
        </authorList>
    </citation>
    <scope>GENOME REANNOTATION</scope>
    <source>
        <strain>Berkeley</strain>
    </source>
</reference>
<sequence length="394" mass="45350">MCDNKKPTVKEIAELCLKKFESLPKTGKPTANQWTILAGIVEFNRNTEACQLVSLGCGTKCIGESKLCPNGLILNDSHAEVLARRGFLRFLYQELKQDRIFHWNSTLSTYDMDEHVEFHFLSTQTPCGDACILEEEQPAARAKRQRLDEDSEMVYTGAKLISDLSDDPMLQTPGALRTKPGRGERTLSMSCSDKIARWNVIGVQGALLDVLISKPIYFSSLNFCCDDAQLESLERAIFKRFDCRTFKHTRFQPQRPQINIDPGIRFEFSQRSDWQPSPNGLIWSQVPEELRPYEISVNGKRQGVTKKKMKTSQAALAISKYKLFLTFLELVKFNPKLSEMFDQQLSDPERIAYASCKDLARDYQFAWREIKEKYFLQWTKKPHELLDFNPMSNK</sequence>
<proteinExistence type="evidence at protein level"/>
<feature type="chain" id="PRO_0000287651" description="tRNA-specific adenosine deaminase 1">
    <location>
        <begin position="1"/>
        <end position="394"/>
    </location>
</feature>
<feature type="domain" description="A to I editase" evidence="2">
    <location>
        <begin position="54"/>
        <end position="388"/>
    </location>
</feature>
<feature type="active site" description="Proton donor" evidence="2">
    <location>
        <position position="80"/>
    </location>
</feature>
<feature type="binding site" evidence="2">
    <location>
        <position position="78"/>
    </location>
    <ligand>
        <name>Zn(2+)</name>
        <dbReference type="ChEBI" id="CHEBI:29105"/>
    </ligand>
</feature>
<feature type="binding site" evidence="1">
    <location>
        <position position="84"/>
    </location>
    <ligand>
        <name>1D-myo-inositol hexakisphosphate</name>
        <dbReference type="ChEBI" id="CHEBI:58130"/>
    </ligand>
</feature>
<feature type="binding site" evidence="1">
    <location>
        <position position="85"/>
    </location>
    <ligand>
        <name>1D-myo-inositol hexakisphosphate</name>
        <dbReference type="ChEBI" id="CHEBI:58130"/>
    </ligand>
</feature>
<feature type="binding site" evidence="2">
    <location>
        <position position="127"/>
    </location>
    <ligand>
        <name>Zn(2+)</name>
        <dbReference type="ChEBI" id="CHEBI:29105"/>
    </ligand>
</feature>
<feature type="binding site" evidence="2">
    <location>
        <position position="191"/>
    </location>
    <ligand>
        <name>Zn(2+)</name>
        <dbReference type="ChEBI" id="CHEBI:29105"/>
    </ligand>
</feature>
<feature type="binding site" evidence="1">
    <location>
        <position position="194"/>
    </location>
    <ligand>
        <name>1D-myo-inositol hexakisphosphate</name>
        <dbReference type="ChEBI" id="CHEBI:58130"/>
    </ligand>
</feature>
<feature type="binding site" evidence="1">
    <location>
        <position position="197"/>
    </location>
    <ligand>
        <name>1D-myo-inositol hexakisphosphate</name>
        <dbReference type="ChEBI" id="CHEBI:58130"/>
    </ligand>
</feature>
<feature type="binding site" evidence="1">
    <location>
        <position position="320"/>
    </location>
    <ligand>
        <name>1D-myo-inositol hexakisphosphate</name>
        <dbReference type="ChEBI" id="CHEBI:58130"/>
    </ligand>
</feature>
<feature type="binding site" evidence="1">
    <location>
        <position position="357"/>
    </location>
    <ligand>
        <name>1D-myo-inositol hexakisphosphate</name>
        <dbReference type="ChEBI" id="CHEBI:58130"/>
    </ligand>
</feature>
<feature type="binding site" evidence="1">
    <location>
        <position position="381"/>
    </location>
    <ligand>
        <name>1D-myo-inositol hexakisphosphate</name>
        <dbReference type="ChEBI" id="CHEBI:58130"/>
    </ligand>
</feature>
<name>ADAT1_DROME</name>
<organism>
    <name type="scientific">Drosophila melanogaster</name>
    <name type="common">Fruit fly</name>
    <dbReference type="NCBI Taxonomy" id="7227"/>
    <lineage>
        <taxon>Eukaryota</taxon>
        <taxon>Metazoa</taxon>
        <taxon>Ecdysozoa</taxon>
        <taxon>Arthropoda</taxon>
        <taxon>Hexapoda</taxon>
        <taxon>Insecta</taxon>
        <taxon>Pterygota</taxon>
        <taxon>Neoptera</taxon>
        <taxon>Endopterygota</taxon>
        <taxon>Diptera</taxon>
        <taxon>Brachycera</taxon>
        <taxon>Muscomorpha</taxon>
        <taxon>Ephydroidea</taxon>
        <taxon>Drosophilidae</taxon>
        <taxon>Drosophila</taxon>
        <taxon>Sophophora</taxon>
    </lineage>
</organism>
<accession>Q9V3R6</accession>
<protein>
    <recommendedName>
        <fullName>tRNA-specific adenosine deaminase 1</fullName>
        <ecNumber>3.5.4.34</ecNumber>
    </recommendedName>
    <alternativeName>
        <fullName>dADAT1</fullName>
    </alternativeName>
    <alternativeName>
        <fullName>tRNA-specific adenosine-37 deaminase</fullName>
    </alternativeName>
</protein>
<gene>
    <name evidence="5" type="primary">Adat1</name>
    <name type="synonym">adat</name>
    <name evidence="5" type="ORF">CG16889</name>
</gene>